<reference key="1">
    <citation type="journal article" date="2008" name="BMC Plant Biol.">
        <title>Comparative chloroplast genomics and phylogenetics of Fagopyrum esculentum ssp. ancestrale - a wild ancestor of cultivated buckwheat.</title>
        <authorList>
            <person name="Logacheva M.D."/>
            <person name="Samigullin T.H."/>
            <person name="Dhingra A."/>
            <person name="Penin A.A."/>
        </authorList>
    </citation>
    <scope>NUCLEOTIDE SEQUENCE [LARGE SCALE GENOMIC DNA]</scope>
</reference>
<sequence length="100" mass="11776">MASQSLIQREQKRKKLEQKYHLIRRSLKKEISKVTSLNEKWEIHGKLQSPPRNSAPTRLHRRCFLTGRPRANYRDFGLSGHILREMVHTCLLPGATRSSW</sequence>
<organism>
    <name type="scientific">Fagopyrum esculentum subsp. ancestrale</name>
    <name type="common">Wild buckwheat</name>
    <dbReference type="NCBI Taxonomy" id="180217"/>
    <lineage>
        <taxon>Eukaryota</taxon>
        <taxon>Viridiplantae</taxon>
        <taxon>Streptophyta</taxon>
        <taxon>Embryophyta</taxon>
        <taxon>Tracheophyta</taxon>
        <taxon>Spermatophyta</taxon>
        <taxon>Magnoliopsida</taxon>
        <taxon>eudicotyledons</taxon>
        <taxon>Gunneridae</taxon>
        <taxon>Pentapetalae</taxon>
        <taxon>Caryophyllales</taxon>
        <taxon>Polygonaceae</taxon>
        <taxon>Polygonoideae</taxon>
        <taxon>Fagopyreae</taxon>
        <taxon>Fagopyrum</taxon>
    </lineage>
</organism>
<gene>
    <name evidence="1" type="primary">rps14</name>
</gene>
<protein>
    <recommendedName>
        <fullName evidence="1">Small ribosomal subunit protein uS14c</fullName>
    </recommendedName>
    <alternativeName>
        <fullName evidence="2">30S ribosomal protein S14, chloroplastic</fullName>
    </alternativeName>
</protein>
<comment type="function">
    <text evidence="1">Binds 16S rRNA, required for the assembly of 30S particles.</text>
</comment>
<comment type="subunit">
    <text evidence="1">Part of the 30S ribosomal subunit.</text>
</comment>
<comment type="subcellular location">
    <subcellularLocation>
        <location>Plastid</location>
        <location>Chloroplast</location>
    </subcellularLocation>
</comment>
<comment type="similarity">
    <text evidence="1">Belongs to the universal ribosomal protein uS14 family.</text>
</comment>
<feature type="chain" id="PRO_0000354416" description="Small ribosomal subunit protein uS14c">
    <location>
        <begin position="1"/>
        <end position="100"/>
    </location>
</feature>
<geneLocation type="chloroplast"/>
<name>RR14_FAGEA</name>
<dbReference type="EMBL" id="EU254477">
    <property type="protein sequence ID" value="ABY79730.1"/>
    <property type="molecule type" value="Genomic_DNA"/>
</dbReference>
<dbReference type="RefSeq" id="YP_001936515.1">
    <property type="nucleotide sequence ID" value="NC_010776.1"/>
</dbReference>
<dbReference type="SMR" id="B2XWK3"/>
<dbReference type="GeneID" id="6336065"/>
<dbReference type="GO" id="GO:0009507">
    <property type="term" value="C:chloroplast"/>
    <property type="evidence" value="ECO:0007669"/>
    <property type="project" value="UniProtKB-SubCell"/>
</dbReference>
<dbReference type="GO" id="GO:0015935">
    <property type="term" value="C:small ribosomal subunit"/>
    <property type="evidence" value="ECO:0007669"/>
    <property type="project" value="TreeGrafter"/>
</dbReference>
<dbReference type="GO" id="GO:0019843">
    <property type="term" value="F:rRNA binding"/>
    <property type="evidence" value="ECO:0007669"/>
    <property type="project" value="UniProtKB-UniRule"/>
</dbReference>
<dbReference type="GO" id="GO:0003735">
    <property type="term" value="F:structural constituent of ribosome"/>
    <property type="evidence" value="ECO:0007669"/>
    <property type="project" value="InterPro"/>
</dbReference>
<dbReference type="GO" id="GO:0006412">
    <property type="term" value="P:translation"/>
    <property type="evidence" value="ECO:0007669"/>
    <property type="project" value="UniProtKB-UniRule"/>
</dbReference>
<dbReference type="FunFam" id="1.10.287.1480:FF:000001">
    <property type="entry name" value="30S ribosomal protein S14"/>
    <property type="match status" value="1"/>
</dbReference>
<dbReference type="Gene3D" id="1.10.287.1480">
    <property type="match status" value="1"/>
</dbReference>
<dbReference type="HAMAP" id="MF_00537">
    <property type="entry name" value="Ribosomal_uS14_1"/>
    <property type="match status" value="1"/>
</dbReference>
<dbReference type="InterPro" id="IPR001209">
    <property type="entry name" value="Ribosomal_uS14"/>
</dbReference>
<dbReference type="InterPro" id="IPR023036">
    <property type="entry name" value="Ribosomal_uS14_bac/plastid"/>
</dbReference>
<dbReference type="InterPro" id="IPR018271">
    <property type="entry name" value="Ribosomal_uS14_CS"/>
</dbReference>
<dbReference type="NCBIfam" id="NF006477">
    <property type="entry name" value="PRK08881.1"/>
    <property type="match status" value="1"/>
</dbReference>
<dbReference type="PANTHER" id="PTHR19836">
    <property type="entry name" value="30S RIBOSOMAL PROTEIN S14"/>
    <property type="match status" value="1"/>
</dbReference>
<dbReference type="PANTHER" id="PTHR19836:SF19">
    <property type="entry name" value="SMALL RIBOSOMAL SUBUNIT PROTEIN US14M"/>
    <property type="match status" value="1"/>
</dbReference>
<dbReference type="Pfam" id="PF00253">
    <property type="entry name" value="Ribosomal_S14"/>
    <property type="match status" value="1"/>
</dbReference>
<dbReference type="SUPFAM" id="SSF57716">
    <property type="entry name" value="Glucocorticoid receptor-like (DNA-binding domain)"/>
    <property type="match status" value="1"/>
</dbReference>
<dbReference type="PROSITE" id="PS00527">
    <property type="entry name" value="RIBOSOMAL_S14"/>
    <property type="match status" value="1"/>
</dbReference>
<proteinExistence type="inferred from homology"/>
<evidence type="ECO:0000255" key="1">
    <source>
        <dbReference type="HAMAP-Rule" id="MF_00537"/>
    </source>
</evidence>
<evidence type="ECO:0000305" key="2"/>
<keyword id="KW-0150">Chloroplast</keyword>
<keyword id="KW-0934">Plastid</keyword>
<keyword id="KW-0687">Ribonucleoprotein</keyword>
<keyword id="KW-0689">Ribosomal protein</keyword>
<keyword id="KW-0694">RNA-binding</keyword>
<keyword id="KW-0699">rRNA-binding</keyword>
<accession>B2XWK3</accession>